<accession>A7X146</accession>
<gene>
    <name type="primary">isdB</name>
    <name type="synonym">frpB</name>
    <name type="synonym">sasJ</name>
    <name type="synonym">sirH</name>
    <name type="ordered locus">SAHV_1120</name>
</gene>
<protein>
    <recommendedName>
        <fullName>Iron-regulated surface determinant protein B</fullName>
    </recommendedName>
    <alternativeName>
        <fullName>Fur-regulated protein B</fullName>
    </alternativeName>
    <alternativeName>
        <fullName>Staphylococcal iron-regulated protein H</fullName>
    </alternativeName>
    <alternativeName>
        <fullName>Staphylococcus aureus surface protein J</fullName>
    </alternativeName>
</protein>
<organism>
    <name type="scientific">Staphylococcus aureus (strain Mu3 / ATCC 700698)</name>
    <dbReference type="NCBI Taxonomy" id="418127"/>
    <lineage>
        <taxon>Bacteria</taxon>
        <taxon>Bacillati</taxon>
        <taxon>Bacillota</taxon>
        <taxon>Bacilli</taxon>
        <taxon>Bacillales</taxon>
        <taxon>Staphylococcaceae</taxon>
        <taxon>Staphylococcus</taxon>
    </lineage>
</organism>
<dbReference type="EMBL" id="AP009324">
    <property type="protein sequence ID" value="BAF78003.1"/>
    <property type="molecule type" value="Genomic_DNA"/>
</dbReference>
<dbReference type="RefSeq" id="WP_001041583.1">
    <property type="nucleotide sequence ID" value="NC_009782.1"/>
</dbReference>
<dbReference type="BMRB" id="A7X146"/>
<dbReference type="SMR" id="A7X146"/>
<dbReference type="KEGG" id="saw:SAHV_1120"/>
<dbReference type="HOGENOM" id="CLU_016167_0_0_9"/>
<dbReference type="PRO" id="PR:A7X146"/>
<dbReference type="GO" id="GO:0005576">
    <property type="term" value="C:extracellular region"/>
    <property type="evidence" value="ECO:0007669"/>
    <property type="project" value="UniProtKB-KW"/>
</dbReference>
<dbReference type="GO" id="GO:0015232">
    <property type="term" value="F:heme transmembrane transporter activity"/>
    <property type="evidence" value="ECO:0007669"/>
    <property type="project" value="InterPro"/>
</dbReference>
<dbReference type="GO" id="GO:0046872">
    <property type="term" value="F:metal ion binding"/>
    <property type="evidence" value="ECO:0007669"/>
    <property type="project" value="UniProtKB-KW"/>
</dbReference>
<dbReference type="CDD" id="cd06920">
    <property type="entry name" value="NEAT"/>
    <property type="match status" value="1"/>
</dbReference>
<dbReference type="Gene3D" id="1.20.58.1270">
    <property type="match status" value="1"/>
</dbReference>
<dbReference type="Gene3D" id="2.60.40.1850">
    <property type="match status" value="2"/>
</dbReference>
<dbReference type="InterPro" id="IPR019929">
    <property type="entry name" value="Iron-reg_IsdB"/>
</dbReference>
<dbReference type="InterPro" id="IPR048652">
    <property type="entry name" value="Isd_H_B_linker"/>
</dbReference>
<dbReference type="InterPro" id="IPR050436">
    <property type="entry name" value="IsdA"/>
</dbReference>
<dbReference type="InterPro" id="IPR019931">
    <property type="entry name" value="LPXTG_anchor"/>
</dbReference>
<dbReference type="InterPro" id="IPR006635">
    <property type="entry name" value="NEAT_dom"/>
</dbReference>
<dbReference type="InterPro" id="IPR037250">
    <property type="entry name" value="NEAT_dom_sf"/>
</dbReference>
<dbReference type="InterPro" id="IPR005877">
    <property type="entry name" value="YSIRK_signal_dom"/>
</dbReference>
<dbReference type="NCBIfam" id="TIGR03657">
    <property type="entry name" value="IsdB"/>
    <property type="match status" value="1"/>
</dbReference>
<dbReference type="NCBIfam" id="TIGR01167">
    <property type="entry name" value="LPXTG_anchor"/>
    <property type="match status" value="1"/>
</dbReference>
<dbReference type="NCBIfam" id="TIGR01168">
    <property type="entry name" value="YSIRK_signal"/>
    <property type="match status" value="1"/>
</dbReference>
<dbReference type="PANTHER" id="PTHR37824">
    <property type="entry name" value="IRON-REGULATED SURFACE DETERMINANT PROTEIN C"/>
    <property type="match status" value="1"/>
</dbReference>
<dbReference type="PANTHER" id="PTHR37824:SF1">
    <property type="entry name" value="IRON-REGULATED SURFACE DETERMINANT PROTEIN C"/>
    <property type="match status" value="1"/>
</dbReference>
<dbReference type="Pfam" id="PF00746">
    <property type="entry name" value="Gram_pos_anchor"/>
    <property type="match status" value="1"/>
</dbReference>
<dbReference type="Pfam" id="PF20861">
    <property type="entry name" value="Isd_H_B_linker"/>
    <property type="match status" value="1"/>
</dbReference>
<dbReference type="Pfam" id="PF05031">
    <property type="entry name" value="NEAT"/>
    <property type="match status" value="2"/>
</dbReference>
<dbReference type="Pfam" id="PF04650">
    <property type="entry name" value="YSIRK_signal"/>
    <property type="match status" value="1"/>
</dbReference>
<dbReference type="SMART" id="SM00725">
    <property type="entry name" value="NEAT"/>
    <property type="match status" value="2"/>
</dbReference>
<dbReference type="SUPFAM" id="SSF158911">
    <property type="entry name" value="NEAT domain-like"/>
    <property type="match status" value="2"/>
</dbReference>
<dbReference type="PROSITE" id="PS50847">
    <property type="entry name" value="GRAM_POS_ANCHORING"/>
    <property type="match status" value="1"/>
</dbReference>
<dbReference type="PROSITE" id="PS50978">
    <property type="entry name" value="NEAT"/>
    <property type="match status" value="2"/>
</dbReference>
<evidence type="ECO:0000250" key="1"/>
<evidence type="ECO:0000250" key="2">
    <source>
        <dbReference type="UniProtKB" id="A6QG30"/>
    </source>
</evidence>
<evidence type="ECO:0000250" key="3">
    <source>
        <dbReference type="UniProtKB" id="Q2FZF0"/>
    </source>
</evidence>
<evidence type="ECO:0000250" key="4">
    <source>
        <dbReference type="UniProtKB" id="Q7A656"/>
    </source>
</evidence>
<evidence type="ECO:0000255" key="5"/>
<evidence type="ECO:0000255" key="6">
    <source>
        <dbReference type="PROSITE-ProRule" id="PRU00337"/>
    </source>
</evidence>
<evidence type="ECO:0000255" key="7">
    <source>
        <dbReference type="PROSITE-ProRule" id="PRU00477"/>
    </source>
</evidence>
<evidence type="ECO:0000256" key="8">
    <source>
        <dbReference type="SAM" id="MobiDB-lite"/>
    </source>
</evidence>
<evidence type="ECO:0000305" key="9"/>
<comment type="function">
    <text evidence="2">Cell wall-anchored surface receptor that extracts heme from oxidized metHb to enable growth on hemoglobin as a sole iron source. Rapidly extracts heme from hemoglobin and transfers it to IsdA or IsdC, which then relays it to the membrane transporter/IsdEF for internalization. Also promotes resistance to hydrogen peroxide and killing by neutrophils.</text>
</comment>
<comment type="subunit">
    <text evidence="2">Interacts with host HBA; this interaction allows heme extraction as iron source. Interacts with IsdA.</text>
</comment>
<comment type="subcellular location">
    <subcellularLocation>
        <location evidence="2">Secreted</location>
        <location evidence="2">Cell wall</location>
        <topology evidence="2">Peptidoglycan-anchor</topology>
    </subcellularLocation>
    <text evidence="2">Anchored to the cell wall by sortase A.</text>
</comment>
<comment type="induction">
    <text evidence="1">Repressed by fur in the presence of iron.</text>
</comment>
<comment type="similarity">
    <text evidence="9">Belongs to the IsdB family.</text>
</comment>
<reference key="1">
    <citation type="journal article" date="2008" name="Antimicrob. Agents Chemother.">
        <title>Mutated response regulator graR is responsible for phenotypic conversion of Staphylococcus aureus from heterogeneous vancomycin-intermediate resistance to vancomycin-intermediate resistance.</title>
        <authorList>
            <person name="Neoh H.-M."/>
            <person name="Cui L."/>
            <person name="Yuzawa H."/>
            <person name="Takeuchi F."/>
            <person name="Matsuo M."/>
            <person name="Hiramatsu K."/>
        </authorList>
    </citation>
    <scope>NUCLEOTIDE SEQUENCE [LARGE SCALE GENOMIC DNA]</scope>
    <source>
        <strain>Mu3 / ATCC 700698</strain>
    </source>
</reference>
<sequence>MNKQQKEFKSFYSIRKSSLGVASVAISTLLLLMSNGEAQAAAEETGGTNTEAQPKTEAVASPTTTSEKAPETKPVANAVSVSNKEVEAPTSETKEAKEVKEVKAPKETKAVKPAAKATNNTYPILNQELREAIKNPAIKDKDHSAPNSRPIDFEMKKENGEQQFYHYASSVKPARVIFTDSKPEIELGLQSGQFWRKFEVYEGDKKLPIKLVSYDTVKDYAYIRFSVSNGTKAVKIVSSTHFNNKEEKYDYTLMEFAQPIYNSADKFKTEEDYKAEKLLAPYKKAKTLERQVYELNKIQDKLPEKLKAEYKKKLEDTKKALDEQVKSAITEFQNVQPTNEKMTDLQDTKYVVYESVENNESMMDTFVKHPIKTGMLNGKKYMVMETTNDDYWKDFMVEGQRVRTISKDAKNNTRTIIFPYVEGKTLYDAIVKVHVKTIDYDGQYHVRIVDKEAFTKANTDKSNKKEQQDNSAKKEATPATPSKPTPSPVEKESQKQDSQKDDNKQLPSVEKENDASSESGKDKTPATKPTKGEVESSSTTPTKVVSTTQNVAKPTTASSKTTKDVVQTSAGSSEAKDSAPLQKANIKNTNDGHTQSQNNKNTQENKAKSLPQTGEESNKDMTLPLMALLALSSIVAFVLPRKRKN</sequence>
<feature type="signal peptide" evidence="5">
    <location>
        <begin position="1"/>
        <end position="40"/>
    </location>
</feature>
<feature type="chain" id="PRO_0000333242" description="Iron-regulated surface determinant protein B">
    <location>
        <begin position="41"/>
        <end position="613"/>
    </location>
</feature>
<feature type="propeptide" id="PRO_0000333243" description="Removed by sortase" evidence="7">
    <location>
        <begin position="614"/>
        <end position="645"/>
    </location>
</feature>
<feature type="domain" description="NEAT 1" evidence="6">
    <location>
        <begin position="144"/>
        <end position="269"/>
    </location>
</feature>
<feature type="domain" description="NEAT 2" evidence="6">
    <location>
        <begin position="341"/>
        <end position="458"/>
    </location>
</feature>
<feature type="region of interest" description="Disordered" evidence="8">
    <location>
        <begin position="38"/>
        <end position="113"/>
    </location>
</feature>
<feature type="region of interest" description="Disordered" evidence="8">
    <location>
        <begin position="458"/>
        <end position="619"/>
    </location>
</feature>
<feature type="short sequence motif" description="YSIRK-G/S signaling motif" evidence="3">
    <location>
        <begin position="12"/>
        <end position="23"/>
    </location>
</feature>
<feature type="short sequence motif" description="LPXTG sorting signal" evidence="7">
    <location>
        <begin position="610"/>
        <end position="614"/>
    </location>
</feature>
<feature type="compositionally biased region" description="Low complexity" evidence="8">
    <location>
        <begin position="38"/>
        <end position="53"/>
    </location>
</feature>
<feature type="compositionally biased region" description="Basic and acidic residues" evidence="8">
    <location>
        <begin position="84"/>
        <end position="110"/>
    </location>
</feature>
<feature type="compositionally biased region" description="Basic and acidic residues" evidence="8">
    <location>
        <begin position="458"/>
        <end position="476"/>
    </location>
</feature>
<feature type="compositionally biased region" description="Basic and acidic residues" evidence="8">
    <location>
        <begin position="489"/>
        <end position="534"/>
    </location>
</feature>
<feature type="compositionally biased region" description="Low complexity" evidence="8">
    <location>
        <begin position="535"/>
        <end position="560"/>
    </location>
</feature>
<feature type="compositionally biased region" description="Polar residues" evidence="8">
    <location>
        <begin position="585"/>
        <end position="615"/>
    </location>
</feature>
<feature type="binding site" description="axial binding residue" evidence="4">
    <location>
        <position position="362"/>
    </location>
    <ligand>
        <name>heme</name>
        <dbReference type="ChEBI" id="CHEBI:30413"/>
    </ligand>
    <ligandPart>
        <name>Fe</name>
        <dbReference type="ChEBI" id="CHEBI:18248"/>
    </ligandPart>
</feature>
<feature type="binding site" description="axial binding residue" evidence="4">
    <location>
        <position position="440"/>
    </location>
    <ligand>
        <name>heme</name>
        <dbReference type="ChEBI" id="CHEBI:30413"/>
    </ligand>
    <ligandPart>
        <name>Fe</name>
        <dbReference type="ChEBI" id="CHEBI:18248"/>
    </ligandPart>
</feature>
<feature type="modified residue" description="Pentaglycyl murein peptidoglycan amidated threonine" evidence="7">
    <location>
        <position position="613"/>
    </location>
</feature>
<keyword id="KW-0134">Cell wall</keyword>
<keyword id="KW-0349">Heme</keyword>
<keyword id="KW-0408">Iron</keyword>
<keyword id="KW-0479">Metal-binding</keyword>
<keyword id="KW-0572">Peptidoglycan-anchor</keyword>
<keyword id="KW-0677">Repeat</keyword>
<keyword id="KW-0964">Secreted</keyword>
<keyword id="KW-0732">Signal</keyword>
<keyword id="KW-0843">Virulence</keyword>
<proteinExistence type="inferred from homology"/>
<name>ISDB_STAA1</name>